<feature type="chain" id="PRO_1000121417" description="Large ribosomal subunit protein bL12">
    <location>
        <begin position="1"/>
        <end position="122"/>
    </location>
</feature>
<sequence length="122" mass="12606">MKKEEIIQAIKEMTVLELNELVEACEEEFGVSAAAPVAVAGAGAAAAGAAEEKTEFDVVLADAGSEKIKVIKAVREVTGLGLKEAKALVDGAPKTLKEAASKEDGEAIKAKLEEVGAKVELK</sequence>
<comment type="function">
    <text evidence="1">Forms part of the ribosomal stalk which helps the ribosome interact with GTP-bound translation factors. Is thus essential for accurate translation.</text>
</comment>
<comment type="subunit">
    <text evidence="1">Homodimer. Part of the ribosomal stalk of the 50S ribosomal subunit. Forms a multimeric L10(L12)X complex, where L10 forms an elongated spine to which 2 to 4 L12 dimers bind in a sequential fashion. Binds GTP-bound translation factors.</text>
</comment>
<comment type="similarity">
    <text evidence="1">Belongs to the bacterial ribosomal protein bL12 family.</text>
</comment>
<accession>B1KSN4</accession>
<name>RL7_CLOBM</name>
<dbReference type="EMBL" id="CP000962">
    <property type="protein sequence ID" value="ACA56322.1"/>
    <property type="molecule type" value="Genomic_DNA"/>
</dbReference>
<dbReference type="RefSeq" id="WP_003360186.1">
    <property type="nucleotide sequence ID" value="NC_010520.1"/>
</dbReference>
<dbReference type="SMR" id="B1KSN4"/>
<dbReference type="KEGG" id="cbl:CLK_2933"/>
<dbReference type="HOGENOM" id="CLU_086499_3_2_9"/>
<dbReference type="GO" id="GO:0022625">
    <property type="term" value="C:cytosolic large ribosomal subunit"/>
    <property type="evidence" value="ECO:0007669"/>
    <property type="project" value="TreeGrafter"/>
</dbReference>
<dbReference type="GO" id="GO:0003729">
    <property type="term" value="F:mRNA binding"/>
    <property type="evidence" value="ECO:0007669"/>
    <property type="project" value="TreeGrafter"/>
</dbReference>
<dbReference type="GO" id="GO:0003735">
    <property type="term" value="F:structural constituent of ribosome"/>
    <property type="evidence" value="ECO:0007669"/>
    <property type="project" value="InterPro"/>
</dbReference>
<dbReference type="GO" id="GO:0006412">
    <property type="term" value="P:translation"/>
    <property type="evidence" value="ECO:0007669"/>
    <property type="project" value="UniProtKB-UniRule"/>
</dbReference>
<dbReference type="CDD" id="cd00387">
    <property type="entry name" value="Ribosomal_L7_L12"/>
    <property type="match status" value="1"/>
</dbReference>
<dbReference type="FunFam" id="1.20.5.710:FF:000002">
    <property type="entry name" value="50S ribosomal protein L7/L12"/>
    <property type="match status" value="1"/>
</dbReference>
<dbReference type="FunFam" id="3.30.1390.10:FF:000001">
    <property type="entry name" value="50S ribosomal protein L7/L12"/>
    <property type="match status" value="1"/>
</dbReference>
<dbReference type="Gene3D" id="3.30.1390.10">
    <property type="match status" value="1"/>
</dbReference>
<dbReference type="Gene3D" id="1.20.5.710">
    <property type="entry name" value="Single helix bin"/>
    <property type="match status" value="1"/>
</dbReference>
<dbReference type="HAMAP" id="MF_00368">
    <property type="entry name" value="Ribosomal_bL12"/>
    <property type="match status" value="1"/>
</dbReference>
<dbReference type="InterPro" id="IPR000206">
    <property type="entry name" value="Ribosomal_bL12"/>
</dbReference>
<dbReference type="InterPro" id="IPR013823">
    <property type="entry name" value="Ribosomal_bL12_C"/>
</dbReference>
<dbReference type="InterPro" id="IPR014719">
    <property type="entry name" value="Ribosomal_bL12_C/ClpS-like"/>
</dbReference>
<dbReference type="InterPro" id="IPR008932">
    <property type="entry name" value="Ribosomal_bL12_oligo"/>
</dbReference>
<dbReference type="InterPro" id="IPR036235">
    <property type="entry name" value="Ribosomal_bL12_oligo_N_sf"/>
</dbReference>
<dbReference type="NCBIfam" id="TIGR00855">
    <property type="entry name" value="L12"/>
    <property type="match status" value="1"/>
</dbReference>
<dbReference type="PANTHER" id="PTHR45987">
    <property type="entry name" value="39S RIBOSOMAL PROTEIN L12"/>
    <property type="match status" value="1"/>
</dbReference>
<dbReference type="PANTHER" id="PTHR45987:SF4">
    <property type="entry name" value="LARGE RIBOSOMAL SUBUNIT PROTEIN BL12M"/>
    <property type="match status" value="1"/>
</dbReference>
<dbReference type="Pfam" id="PF00542">
    <property type="entry name" value="Ribosomal_L12"/>
    <property type="match status" value="1"/>
</dbReference>
<dbReference type="Pfam" id="PF16320">
    <property type="entry name" value="Ribosomal_L12_N"/>
    <property type="match status" value="1"/>
</dbReference>
<dbReference type="SUPFAM" id="SSF54736">
    <property type="entry name" value="ClpS-like"/>
    <property type="match status" value="1"/>
</dbReference>
<dbReference type="SUPFAM" id="SSF48300">
    <property type="entry name" value="Ribosomal protein L7/12, oligomerisation (N-terminal) domain"/>
    <property type="match status" value="1"/>
</dbReference>
<evidence type="ECO:0000255" key="1">
    <source>
        <dbReference type="HAMAP-Rule" id="MF_00368"/>
    </source>
</evidence>
<evidence type="ECO:0000305" key="2"/>
<organism>
    <name type="scientific">Clostridium botulinum (strain Loch Maree / Type A3)</name>
    <dbReference type="NCBI Taxonomy" id="498214"/>
    <lineage>
        <taxon>Bacteria</taxon>
        <taxon>Bacillati</taxon>
        <taxon>Bacillota</taxon>
        <taxon>Clostridia</taxon>
        <taxon>Eubacteriales</taxon>
        <taxon>Clostridiaceae</taxon>
        <taxon>Clostridium</taxon>
    </lineage>
</organism>
<protein>
    <recommendedName>
        <fullName evidence="1">Large ribosomal subunit protein bL12</fullName>
    </recommendedName>
    <alternativeName>
        <fullName evidence="2">50S ribosomal protein L7/L12</fullName>
    </alternativeName>
</protein>
<gene>
    <name evidence="1" type="primary">rplL</name>
    <name type="ordered locus">CLK_2933</name>
</gene>
<reference key="1">
    <citation type="journal article" date="2007" name="PLoS ONE">
        <title>Analysis of the neurotoxin complex genes in Clostridium botulinum A1-A4 and B1 strains: BoNT/A3, /Ba4 and /B1 clusters are located within plasmids.</title>
        <authorList>
            <person name="Smith T.J."/>
            <person name="Hill K.K."/>
            <person name="Foley B.T."/>
            <person name="Detter J.C."/>
            <person name="Munk A.C."/>
            <person name="Bruce D.C."/>
            <person name="Doggett N.A."/>
            <person name="Smith L.A."/>
            <person name="Marks J.D."/>
            <person name="Xie G."/>
            <person name="Brettin T.S."/>
        </authorList>
    </citation>
    <scope>NUCLEOTIDE SEQUENCE [LARGE SCALE GENOMIC DNA]</scope>
    <source>
        <strain>Loch Maree / Type A3</strain>
    </source>
</reference>
<proteinExistence type="inferred from homology"/>
<keyword id="KW-0687">Ribonucleoprotein</keyword>
<keyword id="KW-0689">Ribosomal protein</keyword>